<reference key="1">
    <citation type="journal article" date="1988" name="Nucleic Acids Res.">
        <title>Sequence of the rabbit whey acidic protein cDNA.</title>
        <authorList>
            <person name="Devinoy E."/>
            <person name="Hubert C."/>
            <person name="Schaerer E."/>
            <person name="Houdebine L.-M."/>
            <person name="Kraehenbuhl J.-P."/>
        </authorList>
    </citation>
    <scope>NUCLEOTIDE SEQUENCE [MRNA]</scope>
    <source>
        <tissue>Mammary gland</tissue>
    </source>
</reference>
<reference key="2">
    <citation type="journal article" date="1990" name="Nucleic Acids Res.">
        <title>Complete sequence of the rabbit whey acidic protein gene.</title>
        <authorList>
            <person name="Thepot D."/>
            <person name="Devinoy E."/>
            <person name="Fontaine M.-L."/>
            <person name="Hubert C."/>
            <person name="Houdebine L.M."/>
        </authorList>
    </citation>
    <scope>NUCLEOTIDE SEQUENCE [GENOMIC DNA]</scope>
</reference>
<evidence type="ECO:0000250" key="1"/>
<evidence type="ECO:0000255" key="2">
    <source>
        <dbReference type="PROSITE-ProRule" id="PRU00722"/>
    </source>
</evidence>
<comment type="function">
    <text>Could be a protease inhibitor.</text>
</comment>
<comment type="subcellular location">
    <subcellularLocation>
        <location>Secreted</location>
    </subcellularLocation>
</comment>
<comment type="tissue specificity">
    <text>Milk-specific; major protein component of milk whey.</text>
</comment>
<sequence length="127" mass="13526">MRCLISLALGLLALEAALALAPKFIAPVQVMCPEPSSSEETLCLSDNDCLGSTVCCPSAAGGSCRTPIIVPTPKAGRCPWVQAPMLSQLCEELSDCANDIECRGDKKCCFSRCAMRYLEPILESTPQ</sequence>
<organism>
    <name type="scientific">Oryctolagus cuniculus</name>
    <name type="common">Rabbit</name>
    <dbReference type="NCBI Taxonomy" id="9986"/>
    <lineage>
        <taxon>Eukaryota</taxon>
        <taxon>Metazoa</taxon>
        <taxon>Chordata</taxon>
        <taxon>Craniata</taxon>
        <taxon>Vertebrata</taxon>
        <taxon>Euteleostomi</taxon>
        <taxon>Mammalia</taxon>
        <taxon>Eutheria</taxon>
        <taxon>Euarchontoglires</taxon>
        <taxon>Glires</taxon>
        <taxon>Lagomorpha</taxon>
        <taxon>Leporidae</taxon>
        <taxon>Oryctolagus</taxon>
    </lineage>
</organism>
<protein>
    <recommendedName>
        <fullName>Whey acidic protein</fullName>
        <shortName>WAP</shortName>
    </recommendedName>
</protein>
<keyword id="KW-1015">Disulfide bond</keyword>
<keyword id="KW-0494">Milk protein</keyword>
<keyword id="KW-0646">Protease inhibitor</keyword>
<keyword id="KW-1185">Reference proteome</keyword>
<keyword id="KW-0677">Repeat</keyword>
<keyword id="KW-0964">Secreted</keyword>
<keyword id="KW-0732">Signal</keyword>
<name>WAP_RABIT</name>
<feature type="signal peptide" evidence="1">
    <location>
        <begin position="1"/>
        <end position="19"/>
    </location>
</feature>
<feature type="chain" id="PRO_0000041352" description="Whey acidic protein">
    <location>
        <begin position="20"/>
        <end position="127"/>
    </location>
</feature>
<feature type="domain" description="WAP 1; atypical" evidence="2">
    <location>
        <begin position="26"/>
        <end position="68"/>
    </location>
</feature>
<feature type="domain" description="WAP 2; atypical" evidence="2">
    <location>
        <begin position="71"/>
        <end position="121"/>
    </location>
</feature>
<feature type="disulfide bond" evidence="2">
    <location>
        <begin position="32"/>
        <end position="56"/>
    </location>
</feature>
<feature type="disulfide bond" evidence="2">
    <location>
        <begin position="49"/>
        <end position="64"/>
    </location>
</feature>
<feature type="disulfide bond" evidence="2">
    <location>
        <begin position="78"/>
        <end position="109"/>
    </location>
</feature>
<feature type="disulfide bond" evidence="2">
    <location>
        <begin position="90"/>
        <end position="113"/>
    </location>
</feature>
<feature type="disulfide bond" evidence="2">
    <location>
        <begin position="96"/>
        <end position="108"/>
    </location>
</feature>
<dbReference type="EMBL" id="X52564">
    <property type="protein sequence ID" value="CAA36798.1"/>
    <property type="molecule type" value="Genomic_DNA"/>
</dbReference>
<dbReference type="EMBL" id="X07943">
    <property type="protein sequence ID" value="CAA30764.1"/>
    <property type="molecule type" value="mRNA"/>
</dbReference>
<dbReference type="PIR" id="S01286">
    <property type="entry name" value="S01286"/>
</dbReference>
<dbReference type="RefSeq" id="NP_001075859.1">
    <property type="nucleotide sequence ID" value="NM_001082390.2"/>
</dbReference>
<dbReference type="FunCoup" id="P09412">
    <property type="interactions" value="5"/>
</dbReference>
<dbReference type="STRING" id="9986.ENSOCUP00000049552"/>
<dbReference type="PaxDb" id="9986-ENSOCUP00000019065"/>
<dbReference type="Ensembl" id="ENSOCUT00000022305.1">
    <property type="protein sequence ID" value="ENSOCUP00000019065.1"/>
    <property type="gene ID" value="ENSOCUG00000022314.2"/>
</dbReference>
<dbReference type="GeneID" id="100009255"/>
<dbReference type="KEGG" id="ocu:100009255"/>
<dbReference type="CTD" id="22373"/>
<dbReference type="eggNOG" id="ENOG502RXHY">
    <property type="taxonomic scope" value="Eukaryota"/>
</dbReference>
<dbReference type="GeneTree" id="ENSGT00730000111762"/>
<dbReference type="HOGENOM" id="CLU_156961_0_0_1"/>
<dbReference type="InParanoid" id="P09412"/>
<dbReference type="OMA" id="PQGTKCC"/>
<dbReference type="OrthoDB" id="6060011at2759"/>
<dbReference type="TreeFam" id="TF339378"/>
<dbReference type="Proteomes" id="UP000001811">
    <property type="component" value="Chromosome 10"/>
</dbReference>
<dbReference type="Bgee" id="ENSOCUG00000022314">
    <property type="expression patterns" value="Expressed in prefrontal cortex"/>
</dbReference>
<dbReference type="GO" id="GO:0005576">
    <property type="term" value="C:extracellular region"/>
    <property type="evidence" value="ECO:0007669"/>
    <property type="project" value="UniProtKB-SubCell"/>
</dbReference>
<dbReference type="GO" id="GO:0030414">
    <property type="term" value="F:peptidase inhibitor activity"/>
    <property type="evidence" value="ECO:0007669"/>
    <property type="project" value="UniProtKB-KW"/>
</dbReference>
<dbReference type="CDD" id="cd00199">
    <property type="entry name" value="WAP"/>
    <property type="match status" value="1"/>
</dbReference>
<dbReference type="Gene3D" id="4.10.75.10">
    <property type="entry name" value="Elafin-like"/>
    <property type="match status" value="2"/>
</dbReference>
<dbReference type="InterPro" id="IPR036645">
    <property type="entry name" value="Elafin-like_sf"/>
</dbReference>
<dbReference type="InterPro" id="IPR008197">
    <property type="entry name" value="WAP_dom"/>
</dbReference>
<dbReference type="Pfam" id="PF00095">
    <property type="entry name" value="WAP"/>
    <property type="match status" value="2"/>
</dbReference>
<dbReference type="SMART" id="SM00217">
    <property type="entry name" value="WAP"/>
    <property type="match status" value="2"/>
</dbReference>
<dbReference type="SUPFAM" id="SSF57256">
    <property type="entry name" value="Elafin-like"/>
    <property type="match status" value="2"/>
</dbReference>
<dbReference type="PROSITE" id="PS51390">
    <property type="entry name" value="WAP"/>
    <property type="match status" value="2"/>
</dbReference>
<proteinExistence type="evidence at transcript level"/>
<accession>P09412</accession>
<gene>
    <name type="primary">WAP</name>
</gene>